<sequence length="135" mass="15735">GADEMCPPGWSSNGVYCYMLFKEPKTWDEAEKFCNKQGKDGHLLSIESKKEEILVDIVVSENIGKMYKIWTGLSERSKEQHCSSRWSDGSFFRSYEIAIRYSECFVLEKQSVFRTWVATPCENTFPFMCKYPVPR</sequence>
<accession>Q7T248</accession>
<comment type="function">
    <text evidence="1">Binding of echicetin to GPIbalpha (GP1BA) receptor on platelets alone results in inhibition of platelet aggregation, while binding to both GP1BA receptor and IgMk promotes platelet aggregation and signal transduction.</text>
</comment>
<comment type="subunit">
    <text evidence="4">Heterodimer of subunits alpha and beta; disulfide-linked.</text>
</comment>
<comment type="subcellular location">
    <subcellularLocation>
        <location>Secreted</location>
    </subcellularLocation>
</comment>
<comment type="tissue specificity">
    <text>Expressed by the venom gland.</text>
</comment>
<comment type="similarity">
    <text evidence="5">Belongs to the snaclec family.</text>
</comment>
<comment type="caution">
    <text evidence="5">The name echicetin has been given to 2 different proteins, this one from E.carinatus and another one for which the subspecies has been specified (E.carinatus sochureki). Most experiments have been done on E.carinatus sochureki.</text>
</comment>
<comment type="sequence caution" evidence="5">
    <conflict type="erroneous initiation">
        <sequence resource="EMBL-CDS" id="AAP41218"/>
    </conflict>
    <text>Truncated N-terminus.</text>
</comment>
<keyword id="KW-0002">3D-structure</keyword>
<keyword id="KW-1015">Disulfide bond</keyword>
<keyword id="KW-1199">Hemostasis impairing toxin</keyword>
<keyword id="KW-1202">Platelet aggregation activating toxin</keyword>
<keyword id="KW-1201">Platelet aggregation inhibiting toxin</keyword>
<keyword id="KW-0964">Secreted</keyword>
<keyword id="KW-0732">Signal</keyword>
<keyword id="KW-0800">Toxin</keyword>
<dbReference type="EMBL" id="AY268947">
    <property type="protein sequence ID" value="AAP41218.2"/>
    <property type="status" value="ALT_INIT"/>
    <property type="molecule type" value="mRNA"/>
</dbReference>
<dbReference type="PDB" id="1OZ7">
    <property type="method" value="X-ray"/>
    <property type="resolution" value="2.40 A"/>
    <property type="chains" value="A=5-135"/>
</dbReference>
<dbReference type="PDBsum" id="1OZ7"/>
<dbReference type="SMR" id="Q7T248"/>
<dbReference type="EvolutionaryTrace" id="Q7T248"/>
<dbReference type="GO" id="GO:0005576">
    <property type="term" value="C:extracellular region"/>
    <property type="evidence" value="ECO:0007669"/>
    <property type="project" value="UniProtKB-SubCell"/>
</dbReference>
<dbReference type="GO" id="GO:0090729">
    <property type="term" value="F:toxin activity"/>
    <property type="evidence" value="ECO:0007669"/>
    <property type="project" value="UniProtKB-KW"/>
</dbReference>
<dbReference type="FunFam" id="3.10.100.10:FF:000087">
    <property type="entry name" value="Snaclec rhodocetin subunit delta"/>
    <property type="match status" value="1"/>
</dbReference>
<dbReference type="Gene3D" id="3.10.100.10">
    <property type="entry name" value="Mannose-Binding Protein A, subunit A"/>
    <property type="match status" value="1"/>
</dbReference>
<dbReference type="InterPro" id="IPR001304">
    <property type="entry name" value="C-type_lectin-like"/>
</dbReference>
<dbReference type="InterPro" id="IPR016186">
    <property type="entry name" value="C-type_lectin-like/link_sf"/>
</dbReference>
<dbReference type="InterPro" id="IPR050111">
    <property type="entry name" value="C-type_lectin/snaclec_domain"/>
</dbReference>
<dbReference type="InterPro" id="IPR016187">
    <property type="entry name" value="CTDL_fold"/>
</dbReference>
<dbReference type="PANTHER" id="PTHR22803">
    <property type="entry name" value="MANNOSE, PHOSPHOLIPASE, LECTIN RECEPTOR RELATED"/>
    <property type="match status" value="1"/>
</dbReference>
<dbReference type="Pfam" id="PF00059">
    <property type="entry name" value="Lectin_C"/>
    <property type="match status" value="1"/>
</dbReference>
<dbReference type="SMART" id="SM00034">
    <property type="entry name" value="CLECT"/>
    <property type="match status" value="1"/>
</dbReference>
<dbReference type="SUPFAM" id="SSF56436">
    <property type="entry name" value="C-type lectin-like"/>
    <property type="match status" value="1"/>
</dbReference>
<dbReference type="PROSITE" id="PS50041">
    <property type="entry name" value="C_TYPE_LECTIN_2"/>
    <property type="match status" value="1"/>
</dbReference>
<reference key="1">
    <citation type="journal article" date="2004" name="J. Mol. Biol.">
        <title>Crystal structure of echicetin from Echis carinatus (Indian saw-scaled viper) at 2.4 A resolution.</title>
        <authorList>
            <person name="Jasti J."/>
            <person name="Paramasivam M."/>
            <person name="Srinivasan A."/>
            <person name="Singh T.P."/>
        </authorList>
    </citation>
    <scope>NUCLEOTIDE SEQUENCE [MRNA]</scope>
    <scope>X-RAY CRYSTALLOGRAPHY (2.4 ANGSTROMS) OF 5-135</scope>
    <scope>DISULFIDE BONDS</scope>
    <source>
        <tissue>Venom</tissue>
        <tissue>Venom gland</tissue>
    </source>
</reference>
<proteinExistence type="evidence at protein level"/>
<protein>
    <recommendedName>
        <fullName>Snaclec echicetin subunit alpha</fullName>
    </recommendedName>
</protein>
<name>SLA_ECHCA</name>
<organism>
    <name type="scientific">Echis carinatus</name>
    <name type="common">Saw-scaled viper</name>
    <dbReference type="NCBI Taxonomy" id="40353"/>
    <lineage>
        <taxon>Eukaryota</taxon>
        <taxon>Metazoa</taxon>
        <taxon>Chordata</taxon>
        <taxon>Craniata</taxon>
        <taxon>Vertebrata</taxon>
        <taxon>Euteleostomi</taxon>
        <taxon>Lepidosauria</taxon>
        <taxon>Squamata</taxon>
        <taxon>Bifurcata</taxon>
        <taxon>Unidentata</taxon>
        <taxon>Episquamata</taxon>
        <taxon>Toxicofera</taxon>
        <taxon>Serpentes</taxon>
        <taxon>Colubroidea</taxon>
        <taxon>Viperidae</taxon>
        <taxon>Viperinae</taxon>
        <taxon>Echis</taxon>
    </lineage>
</organism>
<evidence type="ECO:0000250" key="1"/>
<evidence type="ECO:0000255" key="2"/>
<evidence type="ECO:0000255" key="3">
    <source>
        <dbReference type="PROSITE-ProRule" id="PRU00040"/>
    </source>
</evidence>
<evidence type="ECO:0000269" key="4">
    <source>
    </source>
</evidence>
<evidence type="ECO:0000305" key="5"/>
<evidence type="ECO:0007829" key="6">
    <source>
        <dbReference type="PDB" id="1OZ7"/>
    </source>
</evidence>
<feature type="signal peptide" evidence="2">
    <location>
        <begin position="1" status="less than"/>
        <end position="4"/>
    </location>
</feature>
<feature type="chain" id="PRO_0000355265" description="Snaclec echicetin subunit alpha">
    <location>
        <begin position="5"/>
        <end position="135"/>
    </location>
</feature>
<feature type="domain" description="C-type lectin" evidence="3">
    <location>
        <begin position="13"/>
        <end position="130"/>
    </location>
</feature>
<feature type="disulfide bond" evidence="3 4">
    <location>
        <begin position="6"/>
        <end position="17"/>
    </location>
</feature>
<feature type="disulfide bond" evidence="3 4">
    <location>
        <begin position="34"/>
        <end position="129"/>
    </location>
</feature>
<feature type="disulfide bond" description="Interchain (with C-98 in subunit beta)" evidence="3 4">
    <location>
        <position position="82"/>
    </location>
</feature>
<feature type="disulfide bond" evidence="3 4">
    <location>
        <begin position="104"/>
        <end position="121"/>
    </location>
</feature>
<feature type="non-terminal residue">
    <location>
        <position position="1"/>
    </location>
</feature>
<feature type="strand" evidence="6">
    <location>
        <begin position="11"/>
        <end position="13"/>
    </location>
</feature>
<feature type="strand" evidence="6">
    <location>
        <begin position="16"/>
        <end position="25"/>
    </location>
</feature>
<feature type="helix" evidence="6">
    <location>
        <begin position="27"/>
        <end position="37"/>
    </location>
</feature>
<feature type="helix" evidence="6">
    <location>
        <begin position="49"/>
        <end position="62"/>
    </location>
</feature>
<feature type="strand" evidence="6">
    <location>
        <begin position="67"/>
        <end position="75"/>
    </location>
</feature>
<feature type="helix" evidence="6">
    <location>
        <begin position="79"/>
        <end position="81"/>
    </location>
</feature>
<feature type="strand" evidence="6">
    <location>
        <begin position="87"/>
        <end position="90"/>
    </location>
</feature>
<feature type="strand" evidence="6">
    <location>
        <begin position="104"/>
        <end position="108"/>
    </location>
</feature>
<feature type="helix" evidence="6">
    <location>
        <begin position="109"/>
        <end position="111"/>
    </location>
</feature>
<feature type="strand" evidence="6">
    <location>
        <begin position="115"/>
        <end position="119"/>
    </location>
</feature>
<feature type="strand" evidence="6">
    <location>
        <begin position="125"/>
        <end position="131"/>
    </location>
</feature>